<gene>
    <name evidence="1" type="primary">dnaK</name>
    <name type="ordered locus">ECP_0014</name>
</gene>
<comment type="function">
    <text evidence="1">Acts as a chaperone.</text>
</comment>
<comment type="induction">
    <text evidence="1">By stress conditions e.g. heat shock.</text>
</comment>
<comment type="similarity">
    <text evidence="1">Belongs to the heat shock protein 70 family.</text>
</comment>
<dbReference type="EMBL" id="CP000247">
    <property type="protein sequence ID" value="ABG68056.1"/>
    <property type="molecule type" value="Genomic_DNA"/>
</dbReference>
<dbReference type="RefSeq" id="WP_000516135.1">
    <property type="nucleotide sequence ID" value="NC_008253.1"/>
</dbReference>
<dbReference type="SMR" id="Q0TLX5"/>
<dbReference type="GeneID" id="93777429"/>
<dbReference type="KEGG" id="ecp:ECP_0014"/>
<dbReference type="HOGENOM" id="CLU_005965_2_1_6"/>
<dbReference type="Proteomes" id="UP000009182">
    <property type="component" value="Chromosome"/>
</dbReference>
<dbReference type="GO" id="GO:0005524">
    <property type="term" value="F:ATP binding"/>
    <property type="evidence" value="ECO:0007669"/>
    <property type="project" value="UniProtKB-UniRule"/>
</dbReference>
<dbReference type="GO" id="GO:0140662">
    <property type="term" value="F:ATP-dependent protein folding chaperone"/>
    <property type="evidence" value="ECO:0007669"/>
    <property type="project" value="InterPro"/>
</dbReference>
<dbReference type="GO" id="GO:0051082">
    <property type="term" value="F:unfolded protein binding"/>
    <property type="evidence" value="ECO:0007669"/>
    <property type="project" value="InterPro"/>
</dbReference>
<dbReference type="CDD" id="cd10234">
    <property type="entry name" value="ASKHA_NBD_HSP70_DnaK-like"/>
    <property type="match status" value="1"/>
</dbReference>
<dbReference type="FunFam" id="2.60.34.10:FF:000014">
    <property type="entry name" value="Chaperone protein DnaK HSP70"/>
    <property type="match status" value="1"/>
</dbReference>
<dbReference type="FunFam" id="1.20.1270.10:FF:000001">
    <property type="entry name" value="Molecular chaperone DnaK"/>
    <property type="match status" value="1"/>
</dbReference>
<dbReference type="FunFam" id="3.30.420.40:FF:000004">
    <property type="entry name" value="Molecular chaperone DnaK"/>
    <property type="match status" value="1"/>
</dbReference>
<dbReference type="FunFam" id="3.90.640.10:FF:000003">
    <property type="entry name" value="Molecular chaperone DnaK"/>
    <property type="match status" value="1"/>
</dbReference>
<dbReference type="Gene3D" id="1.20.1270.10">
    <property type="match status" value="1"/>
</dbReference>
<dbReference type="Gene3D" id="3.30.420.40">
    <property type="match status" value="2"/>
</dbReference>
<dbReference type="Gene3D" id="3.90.640.10">
    <property type="entry name" value="Actin, Chain A, domain 4"/>
    <property type="match status" value="1"/>
</dbReference>
<dbReference type="Gene3D" id="2.60.34.10">
    <property type="entry name" value="Substrate Binding Domain Of DNAk, Chain A, domain 1"/>
    <property type="match status" value="1"/>
</dbReference>
<dbReference type="HAMAP" id="MF_00332">
    <property type="entry name" value="DnaK"/>
    <property type="match status" value="1"/>
</dbReference>
<dbReference type="InterPro" id="IPR043129">
    <property type="entry name" value="ATPase_NBD"/>
</dbReference>
<dbReference type="InterPro" id="IPR012725">
    <property type="entry name" value="Chaperone_DnaK"/>
</dbReference>
<dbReference type="InterPro" id="IPR018181">
    <property type="entry name" value="Heat_shock_70_CS"/>
</dbReference>
<dbReference type="InterPro" id="IPR029048">
    <property type="entry name" value="HSP70_C_sf"/>
</dbReference>
<dbReference type="InterPro" id="IPR029047">
    <property type="entry name" value="HSP70_peptide-bd_sf"/>
</dbReference>
<dbReference type="InterPro" id="IPR013126">
    <property type="entry name" value="Hsp_70_fam"/>
</dbReference>
<dbReference type="NCBIfam" id="NF001413">
    <property type="entry name" value="PRK00290.1"/>
    <property type="match status" value="1"/>
</dbReference>
<dbReference type="NCBIfam" id="NF003520">
    <property type="entry name" value="PRK05183.1"/>
    <property type="match status" value="1"/>
</dbReference>
<dbReference type="NCBIfam" id="TIGR02350">
    <property type="entry name" value="prok_dnaK"/>
    <property type="match status" value="1"/>
</dbReference>
<dbReference type="PANTHER" id="PTHR19375">
    <property type="entry name" value="HEAT SHOCK PROTEIN 70KDA"/>
    <property type="match status" value="1"/>
</dbReference>
<dbReference type="Pfam" id="PF00012">
    <property type="entry name" value="HSP70"/>
    <property type="match status" value="1"/>
</dbReference>
<dbReference type="PRINTS" id="PR00301">
    <property type="entry name" value="HEATSHOCK70"/>
</dbReference>
<dbReference type="SUPFAM" id="SSF53067">
    <property type="entry name" value="Actin-like ATPase domain"/>
    <property type="match status" value="2"/>
</dbReference>
<dbReference type="SUPFAM" id="SSF100934">
    <property type="entry name" value="Heat shock protein 70kD (HSP70), C-terminal subdomain"/>
    <property type="match status" value="1"/>
</dbReference>
<dbReference type="SUPFAM" id="SSF100920">
    <property type="entry name" value="Heat shock protein 70kD (HSP70), peptide-binding domain"/>
    <property type="match status" value="1"/>
</dbReference>
<dbReference type="PROSITE" id="PS00297">
    <property type="entry name" value="HSP70_1"/>
    <property type="match status" value="1"/>
</dbReference>
<dbReference type="PROSITE" id="PS00329">
    <property type="entry name" value="HSP70_2"/>
    <property type="match status" value="1"/>
</dbReference>
<dbReference type="PROSITE" id="PS01036">
    <property type="entry name" value="HSP70_3"/>
    <property type="match status" value="1"/>
</dbReference>
<name>DNAK_ECOL5</name>
<evidence type="ECO:0000255" key="1">
    <source>
        <dbReference type="HAMAP-Rule" id="MF_00332"/>
    </source>
</evidence>
<evidence type="ECO:0000256" key="2">
    <source>
        <dbReference type="SAM" id="MobiDB-lite"/>
    </source>
</evidence>
<proteinExistence type="inferred from homology"/>
<protein>
    <recommendedName>
        <fullName evidence="1">Chaperone protein DnaK</fullName>
    </recommendedName>
    <alternativeName>
        <fullName evidence="1">HSP70</fullName>
    </alternativeName>
    <alternativeName>
        <fullName evidence="1">Heat shock 70 kDa protein</fullName>
    </alternativeName>
    <alternativeName>
        <fullName evidence="1">Heat shock protein 70</fullName>
    </alternativeName>
</protein>
<sequence length="638" mass="69115">MGKIIGIDLGTTNSCVAIMDGTTPRVLENAEGDRTTPSIIAYTQDGETLVGQPAKRQAVTNPQNTLFAIKRLIGRRFQDEEVQRDVSIMPFKIIAADNGDAWVEVKGQKMAPPQISAEVLKKMKKTAEDYLGEPVTEAVITVPAYFNDAQRQATKDAGRIAGLEVKRIINEPTAAALAYGLDKGTGNRTIAVYDLGGGTFDISIIEIDEVDGEKTFEVLATNGDTHLGGEDFDSRLINYLVEEFKKDQGIDLRNDPLAMQRLKEAAEKAKIELSSAQQTDVNLPYITADATGPKHMNIKVTRAKLESLVEDLVNRSIEPLKVALQDAGLSVSDIDDVILVGGQTRMPMVQKKVAEFFGKEPRKDVNPDEAVAIGAAVQGGVLTGDVKDVLLLDVTPLSLGIETMGGVMTTLIAKNTTIPTKHSQVFSTAEDNQSAVTIHVLQGERKRAADNKSLGQFNLDGINPAPRGMPQIEVTFDIDADGILHVSAKDKNSGKEQKITIKASSGLNEDEIQKMVRDAEANAEADRKFEELVQTRNQGDHLLHSTRKQVEEAGDKLPADDKTAIESALTALETALKGEDKAAIEAKMQELAQVSQKLMEIAQQQHAQQQTAGADASANNAKDDDVVDAEFEEVKDKK</sequence>
<feature type="chain" id="PRO_1000059555" description="Chaperone protein DnaK">
    <location>
        <begin position="1"/>
        <end position="638"/>
    </location>
</feature>
<feature type="region of interest" description="Disordered" evidence="2">
    <location>
        <begin position="602"/>
        <end position="638"/>
    </location>
</feature>
<feature type="compositionally biased region" description="Low complexity" evidence="2">
    <location>
        <begin position="602"/>
        <end position="620"/>
    </location>
</feature>
<feature type="modified residue" description="N6-acetyllysine" evidence="1">
    <location>
        <position position="109"/>
    </location>
</feature>
<feature type="modified residue" description="Phosphothreonine; by autocatalysis" evidence="1">
    <location>
        <position position="199"/>
    </location>
</feature>
<feature type="modified residue" description="N6-acetyllysine" evidence="1">
    <location>
        <position position="245"/>
    </location>
</feature>
<feature type="modified residue" description="N6-acetyllysine" evidence="1">
    <location>
        <position position="304"/>
    </location>
</feature>
<feature type="modified residue" description="N6-acetyllysine" evidence="1">
    <location>
        <position position="421"/>
    </location>
</feature>
<feature type="modified residue" description="N6-acetyllysine" evidence="1">
    <location>
        <position position="556"/>
    </location>
</feature>
<keyword id="KW-0007">Acetylation</keyword>
<keyword id="KW-0067">ATP-binding</keyword>
<keyword id="KW-0143">Chaperone</keyword>
<keyword id="KW-0547">Nucleotide-binding</keyword>
<keyword id="KW-0597">Phosphoprotein</keyword>
<keyword id="KW-0346">Stress response</keyword>
<accession>Q0TLX5</accession>
<reference key="1">
    <citation type="journal article" date="2006" name="Mol. Microbiol.">
        <title>Role of pathogenicity island-associated integrases in the genome plasticity of uropathogenic Escherichia coli strain 536.</title>
        <authorList>
            <person name="Hochhut B."/>
            <person name="Wilde C."/>
            <person name="Balling G."/>
            <person name="Middendorf B."/>
            <person name="Dobrindt U."/>
            <person name="Brzuszkiewicz E."/>
            <person name="Gottschalk G."/>
            <person name="Carniel E."/>
            <person name="Hacker J."/>
        </authorList>
    </citation>
    <scope>NUCLEOTIDE SEQUENCE [LARGE SCALE GENOMIC DNA]</scope>
    <source>
        <strain>536 / UPEC</strain>
    </source>
</reference>
<organism>
    <name type="scientific">Escherichia coli O6:K15:H31 (strain 536 / UPEC)</name>
    <dbReference type="NCBI Taxonomy" id="362663"/>
    <lineage>
        <taxon>Bacteria</taxon>
        <taxon>Pseudomonadati</taxon>
        <taxon>Pseudomonadota</taxon>
        <taxon>Gammaproteobacteria</taxon>
        <taxon>Enterobacterales</taxon>
        <taxon>Enterobacteriaceae</taxon>
        <taxon>Escherichia</taxon>
    </lineage>
</organism>